<proteinExistence type="predicted"/>
<protein>
    <recommendedName>
        <fullName>Uncharacterized protein HI_1402</fullName>
    </recommendedName>
</protein>
<sequence>MLTQIARNRGVPFEILVEKVIEKSAQFAVVIGIIIGQRQAFEDRLLTFNPPEELTALEQEIEQWQFPT</sequence>
<accession>P44177</accession>
<gene>
    <name type="ordered locus">HI_1402</name>
</gene>
<reference key="1">
    <citation type="journal article" date="1995" name="Science">
        <title>Whole-genome random sequencing and assembly of Haemophilus influenzae Rd.</title>
        <authorList>
            <person name="Fleischmann R.D."/>
            <person name="Adams M.D."/>
            <person name="White O."/>
            <person name="Clayton R.A."/>
            <person name="Kirkness E.F."/>
            <person name="Kerlavage A.R."/>
            <person name="Bult C.J."/>
            <person name="Tomb J.-F."/>
            <person name="Dougherty B.A."/>
            <person name="Merrick J.M."/>
            <person name="McKenney K."/>
            <person name="Sutton G.G."/>
            <person name="FitzHugh W."/>
            <person name="Fields C.A."/>
            <person name="Gocayne J.D."/>
            <person name="Scott J.D."/>
            <person name="Shirley R."/>
            <person name="Liu L.-I."/>
            <person name="Glodek A."/>
            <person name="Kelley J.M."/>
            <person name="Weidman J.F."/>
            <person name="Phillips C.A."/>
            <person name="Spriggs T."/>
            <person name="Hedblom E."/>
            <person name="Cotton M.D."/>
            <person name="Utterback T.R."/>
            <person name="Hanna M.C."/>
            <person name="Nguyen D.T."/>
            <person name="Saudek D.M."/>
            <person name="Brandon R.C."/>
            <person name="Fine L.D."/>
            <person name="Fritchman J.L."/>
            <person name="Fuhrmann J.L."/>
            <person name="Geoghagen N.S.M."/>
            <person name="Gnehm C.L."/>
            <person name="McDonald L.A."/>
            <person name="Small K.V."/>
            <person name="Fraser C.M."/>
            <person name="Smith H.O."/>
            <person name="Venter J.C."/>
        </authorList>
    </citation>
    <scope>NUCLEOTIDE SEQUENCE [LARGE SCALE GENOMIC DNA]</scope>
    <source>
        <strain>ATCC 51907 / DSM 11121 / KW20 / Rd</strain>
    </source>
</reference>
<name>Y1402_HAEIN</name>
<dbReference type="EMBL" id="L42023">
    <property type="protein sequence ID" value="AAC23052.1"/>
    <property type="molecule type" value="Genomic_DNA"/>
</dbReference>
<dbReference type="PIR" id="G64027">
    <property type="entry name" value="G64027"/>
</dbReference>
<dbReference type="SMR" id="P44177"/>
<dbReference type="STRING" id="71421.HI_1402"/>
<dbReference type="EnsemblBacteria" id="AAC23052">
    <property type="protein sequence ID" value="AAC23052"/>
    <property type="gene ID" value="HI_1402"/>
</dbReference>
<dbReference type="KEGG" id="hin:HI_1402"/>
<dbReference type="HOGENOM" id="CLU_180683_0_0_6"/>
<dbReference type="Proteomes" id="UP000000579">
    <property type="component" value="Chromosome"/>
</dbReference>
<organism>
    <name type="scientific">Haemophilus influenzae (strain ATCC 51907 / DSM 11121 / KW20 / Rd)</name>
    <dbReference type="NCBI Taxonomy" id="71421"/>
    <lineage>
        <taxon>Bacteria</taxon>
        <taxon>Pseudomonadati</taxon>
        <taxon>Pseudomonadota</taxon>
        <taxon>Gammaproteobacteria</taxon>
        <taxon>Pasteurellales</taxon>
        <taxon>Pasteurellaceae</taxon>
        <taxon>Haemophilus</taxon>
    </lineage>
</organism>
<feature type="chain" id="PRO_0000078040" description="Uncharacterized protein HI_1402">
    <location>
        <begin position="1"/>
        <end position="68"/>
    </location>
</feature>
<keyword id="KW-1185">Reference proteome</keyword>